<accession>B6I4S2</accession>
<proteinExistence type="inferred from homology"/>
<reference key="1">
    <citation type="journal article" date="2008" name="DNA Res.">
        <title>Complete genome sequence and comparative analysis of the wild-type commensal Escherichia coli strain SE11 isolated from a healthy adult.</title>
        <authorList>
            <person name="Oshima K."/>
            <person name="Toh H."/>
            <person name="Ogura Y."/>
            <person name="Sasamoto H."/>
            <person name="Morita H."/>
            <person name="Park S.-H."/>
            <person name="Ooka T."/>
            <person name="Iyoda S."/>
            <person name="Taylor T.D."/>
            <person name="Hayashi T."/>
            <person name="Itoh K."/>
            <person name="Hattori M."/>
        </authorList>
    </citation>
    <scope>NUCLEOTIDE SEQUENCE [LARGE SCALE GENOMIC DNA]</scope>
    <source>
        <strain>SE11</strain>
    </source>
</reference>
<name>RRAA_ECOSE</name>
<keyword id="KW-0963">Cytoplasm</keyword>
<gene>
    <name evidence="1" type="primary">rraA</name>
    <name type="ordered locus">ECSE_4218</name>
</gene>
<organism>
    <name type="scientific">Escherichia coli (strain SE11)</name>
    <dbReference type="NCBI Taxonomy" id="409438"/>
    <lineage>
        <taxon>Bacteria</taxon>
        <taxon>Pseudomonadati</taxon>
        <taxon>Pseudomonadota</taxon>
        <taxon>Gammaproteobacteria</taxon>
        <taxon>Enterobacterales</taxon>
        <taxon>Enterobacteriaceae</taxon>
        <taxon>Escherichia</taxon>
    </lineage>
</organism>
<dbReference type="EMBL" id="AP009240">
    <property type="protein sequence ID" value="BAG79742.1"/>
    <property type="molecule type" value="Genomic_DNA"/>
</dbReference>
<dbReference type="RefSeq" id="WP_000872908.1">
    <property type="nucleotide sequence ID" value="NC_011415.1"/>
</dbReference>
<dbReference type="SMR" id="B6I4S2"/>
<dbReference type="GeneID" id="93777969"/>
<dbReference type="KEGG" id="ecy:ECSE_4218"/>
<dbReference type="HOGENOM" id="CLU_072626_4_0_6"/>
<dbReference type="Proteomes" id="UP000008199">
    <property type="component" value="Chromosome"/>
</dbReference>
<dbReference type="GO" id="GO:0005829">
    <property type="term" value="C:cytosol"/>
    <property type="evidence" value="ECO:0007669"/>
    <property type="project" value="TreeGrafter"/>
</dbReference>
<dbReference type="GO" id="GO:0060698">
    <property type="term" value="F:endoribonuclease inhibitor activity"/>
    <property type="evidence" value="ECO:0007669"/>
    <property type="project" value="UniProtKB-UniRule"/>
</dbReference>
<dbReference type="GO" id="GO:0019899">
    <property type="term" value="F:enzyme binding"/>
    <property type="evidence" value="ECO:0007669"/>
    <property type="project" value="UniProtKB-UniRule"/>
</dbReference>
<dbReference type="GO" id="GO:1902369">
    <property type="term" value="P:negative regulation of RNA catabolic process"/>
    <property type="evidence" value="ECO:0007669"/>
    <property type="project" value="TreeGrafter"/>
</dbReference>
<dbReference type="CDD" id="cd16841">
    <property type="entry name" value="RraA_family"/>
    <property type="match status" value="1"/>
</dbReference>
<dbReference type="FunFam" id="3.50.30.40:FF:000001">
    <property type="entry name" value="Regulator of ribonuclease activity A"/>
    <property type="match status" value="1"/>
</dbReference>
<dbReference type="Gene3D" id="3.50.30.40">
    <property type="entry name" value="Ribonuclease E inhibitor RraA/RraA-like"/>
    <property type="match status" value="1"/>
</dbReference>
<dbReference type="HAMAP" id="MF_00471">
    <property type="entry name" value="RraA"/>
    <property type="match status" value="1"/>
</dbReference>
<dbReference type="InterPro" id="IPR010203">
    <property type="entry name" value="RraA"/>
</dbReference>
<dbReference type="InterPro" id="IPR005493">
    <property type="entry name" value="RraA/RraA-like"/>
</dbReference>
<dbReference type="InterPro" id="IPR036704">
    <property type="entry name" value="RraA/RraA-like_sf"/>
</dbReference>
<dbReference type="InterPro" id="IPR014339">
    <property type="entry name" value="RraA_gpbac"/>
</dbReference>
<dbReference type="NCBIfam" id="TIGR01935">
    <property type="entry name" value="NOT-MenG"/>
    <property type="match status" value="1"/>
</dbReference>
<dbReference type="NCBIfam" id="NF006875">
    <property type="entry name" value="PRK09372.1"/>
    <property type="match status" value="1"/>
</dbReference>
<dbReference type="NCBIfam" id="TIGR02998">
    <property type="entry name" value="RraA_entero"/>
    <property type="match status" value="1"/>
</dbReference>
<dbReference type="PANTHER" id="PTHR33254">
    <property type="entry name" value="4-HYDROXY-4-METHYL-2-OXOGLUTARATE ALDOLASE 3-RELATED"/>
    <property type="match status" value="1"/>
</dbReference>
<dbReference type="PANTHER" id="PTHR33254:SF29">
    <property type="entry name" value="REGULATOR OF RIBONUCLEASE ACTIVITY A"/>
    <property type="match status" value="1"/>
</dbReference>
<dbReference type="Pfam" id="PF03737">
    <property type="entry name" value="RraA-like"/>
    <property type="match status" value="1"/>
</dbReference>
<dbReference type="SUPFAM" id="SSF89562">
    <property type="entry name" value="RraA-like"/>
    <property type="match status" value="1"/>
</dbReference>
<comment type="function">
    <text evidence="1">Globally modulates RNA abundance by binding to RNase E (Rne) and regulating its endonucleolytic activity. Can modulate Rne action in a substrate-dependent manner by altering the composition of the degradosome. Modulates RNA-binding and helicase activities of the degradosome.</text>
</comment>
<comment type="subunit">
    <text evidence="1">Homotrimer. Binds to both RNA-binding sites in the C-terminal region of Rne and to RhlB.</text>
</comment>
<comment type="subcellular location">
    <subcellularLocation>
        <location evidence="1">Cytoplasm</location>
    </subcellularLocation>
</comment>
<comment type="similarity">
    <text evidence="1">Belongs to the RraA family.</text>
</comment>
<sequence length="161" mass="17360">MKYDTSELCDIYQEDVNVVEPLFSNFGGRASFGGQIITVKCFEDNGLLYDLLEQNGRGRVLVVDGGGSVRRALVDAELARLAVQNEWEGLVIYGAVRQVDDLEELDIGIQAMAAIPVGAAGEGIGESDVRVNFGGVTFFSGDHLYADNTGIILSEDPLDIE</sequence>
<evidence type="ECO:0000255" key="1">
    <source>
        <dbReference type="HAMAP-Rule" id="MF_00471"/>
    </source>
</evidence>
<feature type="chain" id="PRO_1000194855" description="Regulator of ribonuclease activity A">
    <location>
        <begin position="1"/>
        <end position="161"/>
    </location>
</feature>
<protein>
    <recommendedName>
        <fullName evidence="1">Regulator of ribonuclease activity A</fullName>
    </recommendedName>
</protein>